<dbReference type="EC" id="4.3.2.10" evidence="1"/>
<dbReference type="EMBL" id="CP001025">
    <property type="protein sequence ID" value="ACB62859.1"/>
    <property type="molecule type" value="Genomic_DNA"/>
</dbReference>
<dbReference type="RefSeq" id="WP_012362933.1">
    <property type="nucleotide sequence ID" value="NC_010551.1"/>
</dbReference>
<dbReference type="SMR" id="B1YRW1"/>
<dbReference type="KEGG" id="bac:BamMC406_0358"/>
<dbReference type="HOGENOM" id="CLU_048577_4_0_4"/>
<dbReference type="OrthoDB" id="9781903at2"/>
<dbReference type="UniPathway" id="UPA00031">
    <property type="reaction ID" value="UER00010"/>
</dbReference>
<dbReference type="Proteomes" id="UP000001680">
    <property type="component" value="Chromosome 1"/>
</dbReference>
<dbReference type="GO" id="GO:0005737">
    <property type="term" value="C:cytoplasm"/>
    <property type="evidence" value="ECO:0007669"/>
    <property type="project" value="UniProtKB-SubCell"/>
</dbReference>
<dbReference type="GO" id="GO:0000107">
    <property type="term" value="F:imidazoleglycerol-phosphate synthase activity"/>
    <property type="evidence" value="ECO:0007669"/>
    <property type="project" value="UniProtKB-UniRule"/>
</dbReference>
<dbReference type="GO" id="GO:0016829">
    <property type="term" value="F:lyase activity"/>
    <property type="evidence" value="ECO:0007669"/>
    <property type="project" value="UniProtKB-KW"/>
</dbReference>
<dbReference type="GO" id="GO:0000105">
    <property type="term" value="P:L-histidine biosynthetic process"/>
    <property type="evidence" value="ECO:0007669"/>
    <property type="project" value="UniProtKB-UniRule"/>
</dbReference>
<dbReference type="CDD" id="cd04731">
    <property type="entry name" value="HisF"/>
    <property type="match status" value="1"/>
</dbReference>
<dbReference type="FunFam" id="3.20.20.70:FF:000006">
    <property type="entry name" value="Imidazole glycerol phosphate synthase subunit HisF"/>
    <property type="match status" value="1"/>
</dbReference>
<dbReference type="Gene3D" id="3.20.20.70">
    <property type="entry name" value="Aldolase class I"/>
    <property type="match status" value="1"/>
</dbReference>
<dbReference type="HAMAP" id="MF_01013">
    <property type="entry name" value="HisF"/>
    <property type="match status" value="1"/>
</dbReference>
<dbReference type="InterPro" id="IPR013785">
    <property type="entry name" value="Aldolase_TIM"/>
</dbReference>
<dbReference type="InterPro" id="IPR006062">
    <property type="entry name" value="His_biosynth"/>
</dbReference>
<dbReference type="InterPro" id="IPR004651">
    <property type="entry name" value="HisF"/>
</dbReference>
<dbReference type="InterPro" id="IPR050064">
    <property type="entry name" value="IGPS_HisA/HisF"/>
</dbReference>
<dbReference type="InterPro" id="IPR011060">
    <property type="entry name" value="RibuloseP-bd_barrel"/>
</dbReference>
<dbReference type="NCBIfam" id="TIGR00735">
    <property type="entry name" value="hisF"/>
    <property type="match status" value="1"/>
</dbReference>
<dbReference type="PANTHER" id="PTHR21235:SF2">
    <property type="entry name" value="IMIDAZOLE GLYCEROL PHOSPHATE SYNTHASE HISHF"/>
    <property type="match status" value="1"/>
</dbReference>
<dbReference type="PANTHER" id="PTHR21235">
    <property type="entry name" value="IMIDAZOLE GLYCEROL PHOSPHATE SYNTHASE SUBUNIT HISF/H IGP SYNTHASE SUBUNIT HISF/H"/>
    <property type="match status" value="1"/>
</dbReference>
<dbReference type="Pfam" id="PF00977">
    <property type="entry name" value="His_biosynth"/>
    <property type="match status" value="1"/>
</dbReference>
<dbReference type="SUPFAM" id="SSF51366">
    <property type="entry name" value="Ribulose-phoshate binding barrel"/>
    <property type="match status" value="1"/>
</dbReference>
<evidence type="ECO:0000255" key="1">
    <source>
        <dbReference type="HAMAP-Rule" id="MF_01013"/>
    </source>
</evidence>
<keyword id="KW-0028">Amino-acid biosynthesis</keyword>
<keyword id="KW-0963">Cytoplasm</keyword>
<keyword id="KW-0368">Histidine biosynthesis</keyword>
<keyword id="KW-0456">Lyase</keyword>
<reference key="1">
    <citation type="submission" date="2008-04" db="EMBL/GenBank/DDBJ databases">
        <title>Complete sequence of chromosome 1 of Burkholderia ambifaria MC40-6.</title>
        <authorList>
            <person name="Copeland A."/>
            <person name="Lucas S."/>
            <person name="Lapidus A."/>
            <person name="Glavina del Rio T."/>
            <person name="Dalin E."/>
            <person name="Tice H."/>
            <person name="Pitluck S."/>
            <person name="Chain P."/>
            <person name="Malfatti S."/>
            <person name="Shin M."/>
            <person name="Vergez L."/>
            <person name="Lang D."/>
            <person name="Schmutz J."/>
            <person name="Larimer F."/>
            <person name="Land M."/>
            <person name="Hauser L."/>
            <person name="Kyrpides N."/>
            <person name="Lykidis A."/>
            <person name="Ramette A."/>
            <person name="Konstantinidis K."/>
            <person name="Tiedje J."/>
            <person name="Richardson P."/>
        </authorList>
    </citation>
    <scope>NUCLEOTIDE SEQUENCE [LARGE SCALE GENOMIC DNA]</scope>
    <source>
        <strain>MC40-6</strain>
    </source>
</reference>
<comment type="function">
    <text evidence="1">IGPS catalyzes the conversion of PRFAR and glutamine to IGP, AICAR and glutamate. The HisF subunit catalyzes the cyclization activity that produces IGP and AICAR from PRFAR using the ammonia provided by the HisH subunit.</text>
</comment>
<comment type="catalytic activity">
    <reaction evidence="1">
        <text>5-[(5-phospho-1-deoxy-D-ribulos-1-ylimino)methylamino]-1-(5-phospho-beta-D-ribosyl)imidazole-4-carboxamide + L-glutamine = D-erythro-1-(imidazol-4-yl)glycerol 3-phosphate + 5-amino-1-(5-phospho-beta-D-ribosyl)imidazole-4-carboxamide + L-glutamate + H(+)</text>
        <dbReference type="Rhea" id="RHEA:24793"/>
        <dbReference type="ChEBI" id="CHEBI:15378"/>
        <dbReference type="ChEBI" id="CHEBI:29985"/>
        <dbReference type="ChEBI" id="CHEBI:58278"/>
        <dbReference type="ChEBI" id="CHEBI:58359"/>
        <dbReference type="ChEBI" id="CHEBI:58475"/>
        <dbReference type="ChEBI" id="CHEBI:58525"/>
        <dbReference type="EC" id="4.3.2.10"/>
    </reaction>
</comment>
<comment type="pathway">
    <text evidence="1">Amino-acid biosynthesis; L-histidine biosynthesis; L-histidine from 5-phospho-alpha-D-ribose 1-diphosphate: step 5/9.</text>
</comment>
<comment type="subunit">
    <text evidence="1">Heterodimer of HisH and HisF.</text>
</comment>
<comment type="subcellular location">
    <subcellularLocation>
        <location evidence="1">Cytoplasm</location>
    </subcellularLocation>
</comment>
<comment type="similarity">
    <text evidence="1">Belongs to the HisA/HisF family.</text>
</comment>
<accession>B1YRW1</accession>
<gene>
    <name evidence="1" type="primary">hisF</name>
    <name type="ordered locus">BamMC406_0358</name>
</gene>
<name>HIS6_BURA4</name>
<protein>
    <recommendedName>
        <fullName evidence="1">Imidazole glycerol phosphate synthase subunit HisF</fullName>
        <ecNumber evidence="1">4.3.2.10</ecNumber>
    </recommendedName>
    <alternativeName>
        <fullName evidence="1">IGP synthase cyclase subunit</fullName>
    </alternativeName>
    <alternativeName>
        <fullName evidence="1">IGP synthase subunit HisF</fullName>
    </alternativeName>
    <alternativeName>
        <fullName evidence="1">ImGP synthase subunit HisF</fullName>
        <shortName evidence="1">IGPS subunit HisF</shortName>
    </alternativeName>
</protein>
<sequence length="257" mass="27305">MALAKRIIPCLDVTAGRVVKGVNFVELRDAGDPVEIARRYDDQGADELTFLDITATSDQRDLILPIIEAVASQVFIPLTVGGGVRAVEDVRRLLNAGADKVSMNSSAVANPQLVRDAADKYGSQCIVVAIDAKRVSADGETPRWEVFTHGGRKNTGLDAIEWARRMAELGAGEILLTSMDRDGTKSGFDLALTRGVSDAVPVPVIASGGVGSLQHLADGIKDGRADAVLAASIFHYGEHTVGEAKRFMSDQGIPVRL</sequence>
<proteinExistence type="inferred from homology"/>
<feature type="chain" id="PRO_1000134972" description="Imidazole glycerol phosphate synthase subunit HisF">
    <location>
        <begin position="1"/>
        <end position="257"/>
    </location>
</feature>
<feature type="active site" evidence="1">
    <location>
        <position position="12"/>
    </location>
</feature>
<feature type="active site" evidence="1">
    <location>
        <position position="131"/>
    </location>
</feature>
<organism>
    <name type="scientific">Burkholderia ambifaria (strain MC40-6)</name>
    <dbReference type="NCBI Taxonomy" id="398577"/>
    <lineage>
        <taxon>Bacteria</taxon>
        <taxon>Pseudomonadati</taxon>
        <taxon>Pseudomonadota</taxon>
        <taxon>Betaproteobacteria</taxon>
        <taxon>Burkholderiales</taxon>
        <taxon>Burkholderiaceae</taxon>
        <taxon>Burkholderia</taxon>
        <taxon>Burkholderia cepacia complex</taxon>
    </lineage>
</organism>